<accession>A8SE59</accession>
<protein>
    <recommendedName>
        <fullName evidence="1">ATP synthase subunit alpha, chloroplastic</fullName>
        <ecNumber evidence="1">7.1.2.2</ecNumber>
    </recommendedName>
    <alternativeName>
        <fullName evidence="1">ATP synthase F1 sector subunit alpha</fullName>
    </alternativeName>
    <alternativeName>
        <fullName evidence="1">F-ATPase subunit alpha</fullName>
    </alternativeName>
</protein>
<geneLocation type="chloroplast"/>
<sequence length="507" mass="55207">MVTIRADEISNIIRERIEQYNREIKIVNTGTVLQVGDGIARIHGLDEVMAGELVEFEEGTIGIALNLESSNVGVVLMGDGLMIQEGSSVKATGRIAQIPVSESYLGRVINALAKPIDGRGEISASESRLIESPAPGIISRRSVYEPLQTGLIAIDSMIPIGRGQRELIIGDRQTGKTAVATDTILNQKGQNVICVYVAIGQKASSVAQVVTTFQERGAMEYTIVVAETADSSATLQYLAPYTGAALAEYFMYRERHTLIIYDDLSKQAQAYRQMSLLLRRPPGREAYPGDVFYLHSRLLERAAKSSSRLGEGSMTALPIVETQSGDVSAYIPTNVISITDGQIFLSADLFNAGIRPAINVGISVSRVGSAAQIKAMKQVAGKSKLELAQFAELEAFAQFASDLDKATQNQLARGQRLRELLKQSQAAPLRVEEQVATIYTGANGYLDSLEIGQVKKFLVQLRTHLKTNKPQFQEIISSTKTLTGDAEALLKEAIQEQLELFLLQEQT</sequence>
<gene>
    <name evidence="1" type="primary">atpA</name>
</gene>
<comment type="function">
    <text evidence="1">Produces ATP from ADP in the presence of a proton gradient across the membrane. The alpha chain is a regulatory subunit.</text>
</comment>
<comment type="catalytic activity">
    <reaction evidence="1">
        <text>ATP + H2O + 4 H(+)(in) = ADP + phosphate + 5 H(+)(out)</text>
        <dbReference type="Rhea" id="RHEA:57720"/>
        <dbReference type="ChEBI" id="CHEBI:15377"/>
        <dbReference type="ChEBI" id="CHEBI:15378"/>
        <dbReference type="ChEBI" id="CHEBI:30616"/>
        <dbReference type="ChEBI" id="CHEBI:43474"/>
        <dbReference type="ChEBI" id="CHEBI:456216"/>
        <dbReference type="EC" id="7.1.2.2"/>
    </reaction>
</comment>
<comment type="subunit">
    <text evidence="1">F-type ATPases have 2 components, CF(1) - the catalytic core - and CF(0) - the membrane proton channel. CF(1) has five subunits: alpha(3), beta(3), gamma(1), delta(1), epsilon(1). CF(0) has four main subunits: a, b, b' and c.</text>
</comment>
<comment type="subcellular location">
    <subcellularLocation>
        <location evidence="1">Plastid</location>
        <location evidence="1">Chloroplast thylakoid membrane</location>
        <topology evidence="1">Peripheral membrane protein</topology>
    </subcellularLocation>
</comment>
<comment type="similarity">
    <text evidence="1">Belongs to the ATPase alpha/beta chains family.</text>
</comment>
<reference key="1">
    <citation type="journal article" date="2007" name="Proc. Natl. Acad. Sci. U.S.A.">
        <title>Using plastid genome-scale data to resolve enigmatic relationships among basal angiosperms.</title>
        <authorList>
            <person name="Moore M.J."/>
            <person name="Bell C.D."/>
            <person name="Soltis P.S."/>
            <person name="Soltis D.E."/>
        </authorList>
    </citation>
    <scope>NUCLEOTIDE SEQUENCE [LARGE SCALE GENOMIC DNA]</scope>
</reference>
<keyword id="KW-0066">ATP synthesis</keyword>
<keyword id="KW-0067">ATP-binding</keyword>
<keyword id="KW-0139">CF(1)</keyword>
<keyword id="KW-0150">Chloroplast</keyword>
<keyword id="KW-0375">Hydrogen ion transport</keyword>
<keyword id="KW-0406">Ion transport</keyword>
<keyword id="KW-0472">Membrane</keyword>
<keyword id="KW-0547">Nucleotide-binding</keyword>
<keyword id="KW-0934">Plastid</keyword>
<keyword id="KW-0793">Thylakoid</keyword>
<keyword id="KW-1278">Translocase</keyword>
<keyword id="KW-0813">Transport</keyword>
<name>ATPA_CERDE</name>
<proteinExistence type="inferred from homology"/>
<dbReference type="EC" id="7.1.2.2" evidence="1"/>
<dbReference type="EMBL" id="EF614270">
    <property type="protein sequence ID" value="ABQ81435.1"/>
    <property type="molecule type" value="Genomic_DNA"/>
</dbReference>
<dbReference type="RefSeq" id="YP_001542432.1">
    <property type="nucleotide sequence ID" value="NC_009962.1"/>
</dbReference>
<dbReference type="SMR" id="A8SE59"/>
<dbReference type="GeneID" id="5729379"/>
<dbReference type="GO" id="GO:0009535">
    <property type="term" value="C:chloroplast thylakoid membrane"/>
    <property type="evidence" value="ECO:0007669"/>
    <property type="project" value="UniProtKB-SubCell"/>
</dbReference>
<dbReference type="GO" id="GO:0045259">
    <property type="term" value="C:proton-transporting ATP synthase complex"/>
    <property type="evidence" value="ECO:0007669"/>
    <property type="project" value="UniProtKB-KW"/>
</dbReference>
<dbReference type="GO" id="GO:0043531">
    <property type="term" value="F:ADP binding"/>
    <property type="evidence" value="ECO:0007669"/>
    <property type="project" value="TreeGrafter"/>
</dbReference>
<dbReference type="GO" id="GO:0005524">
    <property type="term" value="F:ATP binding"/>
    <property type="evidence" value="ECO:0007669"/>
    <property type="project" value="UniProtKB-UniRule"/>
</dbReference>
<dbReference type="GO" id="GO:0046933">
    <property type="term" value="F:proton-transporting ATP synthase activity, rotational mechanism"/>
    <property type="evidence" value="ECO:0007669"/>
    <property type="project" value="UniProtKB-UniRule"/>
</dbReference>
<dbReference type="CDD" id="cd18113">
    <property type="entry name" value="ATP-synt_F1_alpha_C"/>
    <property type="match status" value="1"/>
</dbReference>
<dbReference type="CDD" id="cd18116">
    <property type="entry name" value="ATP-synt_F1_alpha_N"/>
    <property type="match status" value="1"/>
</dbReference>
<dbReference type="CDD" id="cd01132">
    <property type="entry name" value="F1-ATPase_alpha_CD"/>
    <property type="match status" value="1"/>
</dbReference>
<dbReference type="FunFam" id="1.20.150.20:FF:000001">
    <property type="entry name" value="ATP synthase subunit alpha"/>
    <property type="match status" value="1"/>
</dbReference>
<dbReference type="FunFam" id="2.40.30.20:FF:000001">
    <property type="entry name" value="ATP synthase subunit alpha"/>
    <property type="match status" value="1"/>
</dbReference>
<dbReference type="FunFam" id="3.40.50.300:FF:000002">
    <property type="entry name" value="ATP synthase subunit alpha"/>
    <property type="match status" value="1"/>
</dbReference>
<dbReference type="Gene3D" id="2.40.30.20">
    <property type="match status" value="1"/>
</dbReference>
<dbReference type="Gene3D" id="1.20.150.20">
    <property type="entry name" value="ATP synthase alpha/beta chain, C-terminal domain"/>
    <property type="match status" value="1"/>
</dbReference>
<dbReference type="Gene3D" id="3.40.50.300">
    <property type="entry name" value="P-loop containing nucleotide triphosphate hydrolases"/>
    <property type="match status" value="1"/>
</dbReference>
<dbReference type="HAMAP" id="MF_01346">
    <property type="entry name" value="ATP_synth_alpha_bact"/>
    <property type="match status" value="1"/>
</dbReference>
<dbReference type="InterPro" id="IPR023366">
    <property type="entry name" value="ATP_synth_asu-like_sf"/>
</dbReference>
<dbReference type="InterPro" id="IPR000793">
    <property type="entry name" value="ATP_synth_asu_C"/>
</dbReference>
<dbReference type="InterPro" id="IPR038376">
    <property type="entry name" value="ATP_synth_asu_C_sf"/>
</dbReference>
<dbReference type="InterPro" id="IPR033732">
    <property type="entry name" value="ATP_synth_F1_a_nt-bd_dom"/>
</dbReference>
<dbReference type="InterPro" id="IPR005294">
    <property type="entry name" value="ATP_synth_F1_asu"/>
</dbReference>
<dbReference type="InterPro" id="IPR020003">
    <property type="entry name" value="ATPase_a/bsu_AS"/>
</dbReference>
<dbReference type="InterPro" id="IPR004100">
    <property type="entry name" value="ATPase_F1/V1/A1_a/bsu_N"/>
</dbReference>
<dbReference type="InterPro" id="IPR036121">
    <property type="entry name" value="ATPase_F1/V1/A1_a/bsu_N_sf"/>
</dbReference>
<dbReference type="InterPro" id="IPR000194">
    <property type="entry name" value="ATPase_F1/V1/A1_a/bsu_nucl-bd"/>
</dbReference>
<dbReference type="InterPro" id="IPR027417">
    <property type="entry name" value="P-loop_NTPase"/>
</dbReference>
<dbReference type="NCBIfam" id="TIGR00962">
    <property type="entry name" value="atpA"/>
    <property type="match status" value="1"/>
</dbReference>
<dbReference type="NCBIfam" id="NF009884">
    <property type="entry name" value="PRK13343.1"/>
    <property type="match status" value="1"/>
</dbReference>
<dbReference type="PANTHER" id="PTHR48082">
    <property type="entry name" value="ATP SYNTHASE SUBUNIT ALPHA, MITOCHONDRIAL"/>
    <property type="match status" value="1"/>
</dbReference>
<dbReference type="PANTHER" id="PTHR48082:SF2">
    <property type="entry name" value="ATP SYNTHASE SUBUNIT ALPHA, MITOCHONDRIAL"/>
    <property type="match status" value="1"/>
</dbReference>
<dbReference type="Pfam" id="PF00006">
    <property type="entry name" value="ATP-synt_ab"/>
    <property type="match status" value="1"/>
</dbReference>
<dbReference type="Pfam" id="PF00306">
    <property type="entry name" value="ATP-synt_ab_C"/>
    <property type="match status" value="1"/>
</dbReference>
<dbReference type="Pfam" id="PF02874">
    <property type="entry name" value="ATP-synt_ab_N"/>
    <property type="match status" value="1"/>
</dbReference>
<dbReference type="PIRSF" id="PIRSF039088">
    <property type="entry name" value="F_ATPase_subunit_alpha"/>
    <property type="match status" value="1"/>
</dbReference>
<dbReference type="SUPFAM" id="SSF47917">
    <property type="entry name" value="C-terminal domain of alpha and beta subunits of F1 ATP synthase"/>
    <property type="match status" value="1"/>
</dbReference>
<dbReference type="SUPFAM" id="SSF50615">
    <property type="entry name" value="N-terminal domain of alpha and beta subunits of F1 ATP synthase"/>
    <property type="match status" value="1"/>
</dbReference>
<dbReference type="SUPFAM" id="SSF52540">
    <property type="entry name" value="P-loop containing nucleoside triphosphate hydrolases"/>
    <property type="match status" value="1"/>
</dbReference>
<dbReference type="PROSITE" id="PS00152">
    <property type="entry name" value="ATPASE_ALPHA_BETA"/>
    <property type="match status" value="1"/>
</dbReference>
<evidence type="ECO:0000255" key="1">
    <source>
        <dbReference type="HAMAP-Rule" id="MF_01346"/>
    </source>
</evidence>
<organism>
    <name type="scientific">Ceratophyllum demersum</name>
    <name type="common">Rigid hornwort</name>
    <name type="synonym">Coontail</name>
    <dbReference type="NCBI Taxonomy" id="4428"/>
    <lineage>
        <taxon>Eukaryota</taxon>
        <taxon>Viridiplantae</taxon>
        <taxon>Streptophyta</taxon>
        <taxon>Embryophyta</taxon>
        <taxon>Tracheophyta</taxon>
        <taxon>Spermatophyta</taxon>
        <taxon>Magnoliopsida</taxon>
        <taxon>Ceratophyllales</taxon>
        <taxon>Ceratophyllaceae</taxon>
        <taxon>Ceratophyllum</taxon>
    </lineage>
</organism>
<feature type="chain" id="PRO_0000339076" description="ATP synthase subunit alpha, chloroplastic">
    <location>
        <begin position="1"/>
        <end position="507"/>
    </location>
</feature>
<feature type="binding site" evidence="1">
    <location>
        <begin position="170"/>
        <end position="177"/>
    </location>
    <ligand>
        <name>ATP</name>
        <dbReference type="ChEBI" id="CHEBI:30616"/>
    </ligand>
</feature>
<feature type="site" description="Required for activity" evidence="1">
    <location>
        <position position="363"/>
    </location>
</feature>